<dbReference type="EC" id="2.1.1.33" evidence="2"/>
<dbReference type="EMBL" id="AE017221">
    <property type="protein sequence ID" value="AAS81597.1"/>
    <property type="molecule type" value="Genomic_DNA"/>
</dbReference>
<dbReference type="RefSeq" id="WP_011173656.1">
    <property type="nucleotide sequence ID" value="NC_005835.1"/>
</dbReference>
<dbReference type="SMR" id="Q72I77"/>
<dbReference type="DNASU" id="2774621"/>
<dbReference type="KEGG" id="tth:TT_C1255"/>
<dbReference type="eggNOG" id="COG0220">
    <property type="taxonomic scope" value="Bacteria"/>
</dbReference>
<dbReference type="HOGENOM" id="CLU_077150_0_0_0"/>
<dbReference type="OrthoDB" id="9802090at2"/>
<dbReference type="UniPathway" id="UPA00989"/>
<dbReference type="Proteomes" id="UP000000592">
    <property type="component" value="Chromosome"/>
</dbReference>
<dbReference type="GO" id="GO:0043527">
    <property type="term" value="C:tRNA methyltransferase complex"/>
    <property type="evidence" value="ECO:0007669"/>
    <property type="project" value="TreeGrafter"/>
</dbReference>
<dbReference type="GO" id="GO:0008176">
    <property type="term" value="F:tRNA (guanine(46)-N7)-methyltransferase activity"/>
    <property type="evidence" value="ECO:0007669"/>
    <property type="project" value="UniProtKB-UniRule"/>
</dbReference>
<dbReference type="CDD" id="cd02440">
    <property type="entry name" value="AdoMet_MTases"/>
    <property type="match status" value="1"/>
</dbReference>
<dbReference type="Gene3D" id="3.40.50.150">
    <property type="entry name" value="Vaccinia Virus protein VP39"/>
    <property type="match status" value="1"/>
</dbReference>
<dbReference type="HAMAP" id="MF_01057">
    <property type="entry name" value="tRNA_methyltr_TrmB"/>
    <property type="match status" value="1"/>
</dbReference>
<dbReference type="InterPro" id="IPR029063">
    <property type="entry name" value="SAM-dependent_MTases_sf"/>
</dbReference>
<dbReference type="InterPro" id="IPR003358">
    <property type="entry name" value="tRNA_(Gua-N-7)_MeTrfase_Trmb"/>
</dbReference>
<dbReference type="InterPro" id="IPR055361">
    <property type="entry name" value="tRNA_methyltr_TrmB_bact"/>
</dbReference>
<dbReference type="NCBIfam" id="TIGR00091">
    <property type="entry name" value="tRNA (guanosine(46)-N7)-methyltransferase TrmB"/>
    <property type="match status" value="1"/>
</dbReference>
<dbReference type="PANTHER" id="PTHR23417">
    <property type="entry name" value="3-DEOXY-D-MANNO-OCTULOSONIC-ACID TRANSFERASE/TRNA GUANINE-N 7 - -METHYLTRANSFERASE"/>
    <property type="match status" value="1"/>
</dbReference>
<dbReference type="PANTHER" id="PTHR23417:SF14">
    <property type="entry name" value="PENTACOTRIPEPTIDE-REPEAT REGION OF PRORP DOMAIN-CONTAINING PROTEIN"/>
    <property type="match status" value="1"/>
</dbReference>
<dbReference type="Pfam" id="PF02390">
    <property type="entry name" value="Methyltransf_4"/>
    <property type="match status" value="1"/>
</dbReference>
<dbReference type="SUPFAM" id="SSF53335">
    <property type="entry name" value="S-adenosyl-L-methionine-dependent methyltransferases"/>
    <property type="match status" value="1"/>
</dbReference>
<dbReference type="PROSITE" id="PS51625">
    <property type="entry name" value="SAM_MT_TRMB"/>
    <property type="match status" value="1"/>
</dbReference>
<accession>Q72I77</accession>
<organism>
    <name type="scientific">Thermus thermophilus (strain ATCC BAA-163 / DSM 7039 / HB27)</name>
    <dbReference type="NCBI Taxonomy" id="262724"/>
    <lineage>
        <taxon>Bacteria</taxon>
        <taxon>Thermotogati</taxon>
        <taxon>Deinococcota</taxon>
        <taxon>Deinococci</taxon>
        <taxon>Thermales</taxon>
        <taxon>Thermaceae</taxon>
        <taxon>Thermus</taxon>
    </lineage>
</organism>
<sequence>MLVVPARLHRWPPEVQDLFGREGPLVLEIGFGDGRFTAELARSRPDWLVLGAEVSAASVLRALRRMRREGLANVRLYHGQGPFALRNLVLPGTLDQVIVNFPDPWPKKRHQERRLLREAFFRRLSTRLKSGGSLLLTTDHEGYFRFALEEAERTGLYRVEVRPPPEAHLRTKYALKWKEAGRTFFHAAFIKLREDPAPWPPLRRYDVAHALLSGELPQDLALEKTAVRLKEGVAVFLEVARGKEGFYVLTHVEEEDLTQDLLLEVRKSARGVYAGVSRFGSPLITEAVKGAVRALVDRLEAHGLEVVQDHT</sequence>
<reference key="1">
    <citation type="journal article" date="2004" name="Nat. Biotechnol.">
        <title>The genome sequence of the extreme thermophile Thermus thermophilus.</title>
        <authorList>
            <person name="Henne A."/>
            <person name="Brueggemann H."/>
            <person name="Raasch C."/>
            <person name="Wiezer A."/>
            <person name="Hartsch T."/>
            <person name="Liesegang H."/>
            <person name="Johann A."/>
            <person name="Lienard T."/>
            <person name="Gohl O."/>
            <person name="Martinez-Arias R."/>
            <person name="Jacobi C."/>
            <person name="Starkuviene V."/>
            <person name="Schlenczeck S."/>
            <person name="Dencker S."/>
            <person name="Huber R."/>
            <person name="Klenk H.-P."/>
            <person name="Kramer W."/>
            <person name="Merkl R."/>
            <person name="Gottschalk G."/>
            <person name="Fritz H.-J."/>
        </authorList>
    </citation>
    <scope>NUCLEOTIDE SEQUENCE [LARGE SCALE GENOMIC DNA]</scope>
    <source>
        <strain>ATCC BAA-163 / DSM 7039 / HB27</strain>
    </source>
</reference>
<comment type="function">
    <text evidence="2">Catalyzes the formation of N(7)-methylguanine at position 46 (m7G46) in tRNA.</text>
</comment>
<comment type="catalytic activity">
    <reaction evidence="2">
        <text>guanosine(46) in tRNA + S-adenosyl-L-methionine = N(7)-methylguanosine(46) in tRNA + S-adenosyl-L-homocysteine</text>
        <dbReference type="Rhea" id="RHEA:42708"/>
        <dbReference type="Rhea" id="RHEA-COMP:10188"/>
        <dbReference type="Rhea" id="RHEA-COMP:10189"/>
        <dbReference type="ChEBI" id="CHEBI:57856"/>
        <dbReference type="ChEBI" id="CHEBI:59789"/>
        <dbReference type="ChEBI" id="CHEBI:74269"/>
        <dbReference type="ChEBI" id="CHEBI:74480"/>
        <dbReference type="EC" id="2.1.1.33"/>
    </reaction>
</comment>
<comment type="pathway">
    <text evidence="2">tRNA modification; N(7)-methylguanine-tRNA biosynthesis.</text>
</comment>
<comment type="similarity">
    <text evidence="2">Belongs to the class I-like SAM-binding methyltransferase superfamily. TrmB family.</text>
</comment>
<keyword id="KW-0489">Methyltransferase</keyword>
<keyword id="KW-0949">S-adenosyl-L-methionine</keyword>
<keyword id="KW-0808">Transferase</keyword>
<keyword id="KW-0819">tRNA processing</keyword>
<evidence type="ECO:0000250" key="1"/>
<evidence type="ECO:0000255" key="2">
    <source>
        <dbReference type="HAMAP-Rule" id="MF_01057"/>
    </source>
</evidence>
<feature type="chain" id="PRO_0000171414" description="tRNA (guanine-N(7)-)-methyltransferase">
    <location>
        <begin position="1"/>
        <end position="311"/>
    </location>
</feature>
<feature type="active site" evidence="1">
    <location>
        <position position="103"/>
    </location>
</feature>
<feature type="binding site" evidence="2">
    <location>
        <position position="28"/>
    </location>
    <ligand>
        <name>S-adenosyl-L-methionine</name>
        <dbReference type="ChEBI" id="CHEBI:59789"/>
    </ligand>
</feature>
<feature type="binding site" evidence="2">
    <location>
        <position position="53"/>
    </location>
    <ligand>
        <name>S-adenosyl-L-methionine</name>
        <dbReference type="ChEBI" id="CHEBI:59789"/>
    </ligand>
</feature>
<feature type="binding site" evidence="2">
    <location>
        <position position="103"/>
    </location>
    <ligand>
        <name>S-adenosyl-L-methionine</name>
        <dbReference type="ChEBI" id="CHEBI:59789"/>
    </ligand>
</feature>
<feature type="binding site" evidence="2">
    <location>
        <position position="107"/>
    </location>
    <ligand>
        <name>substrate</name>
    </ligand>
</feature>
<feature type="binding site" evidence="2">
    <location>
        <position position="139"/>
    </location>
    <ligand>
        <name>substrate</name>
    </ligand>
</feature>
<gene>
    <name evidence="2" type="primary">trmB</name>
    <name type="ordered locus">TT_C1255</name>
</gene>
<name>TRMB_THET2</name>
<proteinExistence type="inferred from homology"/>
<protein>
    <recommendedName>
        <fullName evidence="2">tRNA (guanine-N(7)-)-methyltransferase</fullName>
        <ecNumber evidence="2">2.1.1.33</ecNumber>
    </recommendedName>
    <alternativeName>
        <fullName evidence="2">tRNA (guanine(46)-N(7))-methyltransferase</fullName>
    </alternativeName>
    <alternativeName>
        <fullName evidence="2">tRNA(m7G46)-methyltransferase</fullName>
    </alternativeName>
</protein>